<organism>
    <name type="scientific">Haemophilus influenzae (strain ATCC 51907 / DSM 11121 / KW20 / Rd)</name>
    <dbReference type="NCBI Taxonomy" id="71421"/>
    <lineage>
        <taxon>Bacteria</taxon>
        <taxon>Pseudomonadati</taxon>
        <taxon>Pseudomonadota</taxon>
        <taxon>Gammaproteobacteria</taxon>
        <taxon>Pasteurellales</taxon>
        <taxon>Pasteurellaceae</taxon>
        <taxon>Haemophilus</taxon>
    </lineage>
</organism>
<dbReference type="EMBL" id="L42023">
    <property type="protein sequence ID" value="AAC22217.1"/>
    <property type="molecule type" value="Genomic_DNA"/>
</dbReference>
<dbReference type="PIR" id="E64009">
    <property type="entry name" value="E64009"/>
</dbReference>
<dbReference type="RefSeq" id="NP_438712.1">
    <property type="nucleotide sequence ID" value="NC_000907.1"/>
</dbReference>
<dbReference type="SMR" id="P44014"/>
<dbReference type="STRING" id="71421.HI_0554"/>
<dbReference type="EnsemblBacteria" id="AAC22217">
    <property type="protein sequence ID" value="AAC22217"/>
    <property type="gene ID" value="HI_0554"/>
</dbReference>
<dbReference type="KEGG" id="hin:HI_0554"/>
<dbReference type="PATRIC" id="fig|71421.8.peg.574"/>
<dbReference type="eggNOG" id="COG1943">
    <property type="taxonomic scope" value="Bacteria"/>
</dbReference>
<dbReference type="HOGENOM" id="CLU_101329_0_0_6"/>
<dbReference type="OrthoDB" id="9794403at2"/>
<dbReference type="BioCyc" id="HINF71421:G1GJ1-567-MONOMER"/>
<dbReference type="Proteomes" id="UP000000579">
    <property type="component" value="Chromosome"/>
</dbReference>
<dbReference type="GO" id="GO:0043565">
    <property type="term" value="F:sequence-specific DNA binding"/>
    <property type="evidence" value="ECO:0000318"/>
    <property type="project" value="GO_Central"/>
</dbReference>
<dbReference type="GO" id="GO:0004803">
    <property type="term" value="F:transposase activity"/>
    <property type="evidence" value="ECO:0007669"/>
    <property type="project" value="InterPro"/>
</dbReference>
<dbReference type="GO" id="GO:0006310">
    <property type="term" value="P:DNA recombination"/>
    <property type="evidence" value="ECO:0000318"/>
    <property type="project" value="GO_Central"/>
</dbReference>
<dbReference type="GO" id="GO:0006313">
    <property type="term" value="P:DNA transposition"/>
    <property type="evidence" value="ECO:0007669"/>
    <property type="project" value="InterPro"/>
</dbReference>
<dbReference type="Gene3D" id="3.30.70.1290">
    <property type="entry name" value="Transposase IS200-like"/>
    <property type="match status" value="1"/>
</dbReference>
<dbReference type="InterPro" id="IPR052715">
    <property type="entry name" value="RAYT_transposase"/>
</dbReference>
<dbReference type="InterPro" id="IPR002686">
    <property type="entry name" value="Transposase_17"/>
</dbReference>
<dbReference type="InterPro" id="IPR036515">
    <property type="entry name" value="Transposase_17_sf"/>
</dbReference>
<dbReference type="PANTHER" id="PTHR36966">
    <property type="entry name" value="REP-ASSOCIATED TYROSINE TRANSPOSASE"/>
    <property type="match status" value="1"/>
</dbReference>
<dbReference type="PANTHER" id="PTHR36966:SF1">
    <property type="entry name" value="REP-ASSOCIATED TYROSINE TRANSPOSASE"/>
    <property type="match status" value="1"/>
</dbReference>
<dbReference type="SMART" id="SM01321">
    <property type="entry name" value="Y1_Tnp"/>
    <property type="match status" value="1"/>
</dbReference>
<dbReference type="SUPFAM" id="SSF143422">
    <property type="entry name" value="Transposase IS200-like"/>
    <property type="match status" value="1"/>
</dbReference>
<gene>
    <name type="ordered locus">HI_0554</name>
</gene>
<accession>P44014</accession>
<feature type="chain" id="PRO_0000077931" description="Uncharacterized protein HI_0554">
    <location>
        <begin position="1"/>
        <end position="180"/>
    </location>
</feature>
<keyword id="KW-1185">Reference proteome</keyword>
<reference key="1">
    <citation type="journal article" date="1995" name="Science">
        <title>Whole-genome random sequencing and assembly of Haemophilus influenzae Rd.</title>
        <authorList>
            <person name="Fleischmann R.D."/>
            <person name="Adams M.D."/>
            <person name="White O."/>
            <person name="Clayton R.A."/>
            <person name="Kirkness E.F."/>
            <person name="Kerlavage A.R."/>
            <person name="Bult C.J."/>
            <person name="Tomb J.-F."/>
            <person name="Dougherty B.A."/>
            <person name="Merrick J.M."/>
            <person name="McKenney K."/>
            <person name="Sutton G.G."/>
            <person name="FitzHugh W."/>
            <person name="Fields C.A."/>
            <person name="Gocayne J.D."/>
            <person name="Scott J.D."/>
            <person name="Shirley R."/>
            <person name="Liu L.-I."/>
            <person name="Glodek A."/>
            <person name="Kelley J.M."/>
            <person name="Weidman J.F."/>
            <person name="Phillips C.A."/>
            <person name="Spriggs T."/>
            <person name="Hedblom E."/>
            <person name="Cotton M.D."/>
            <person name="Utterback T.R."/>
            <person name="Hanna M.C."/>
            <person name="Nguyen D.T."/>
            <person name="Saudek D.M."/>
            <person name="Brandon R.C."/>
            <person name="Fine L.D."/>
            <person name="Fritchman J.L."/>
            <person name="Fuhrmann J.L."/>
            <person name="Geoghagen N.S.M."/>
            <person name="Gnehm C.L."/>
            <person name="McDonald L.A."/>
            <person name="Small K.V."/>
            <person name="Fraser C.M."/>
            <person name="Smith H.O."/>
            <person name="Venter J.C."/>
        </authorList>
    </citation>
    <scope>NUCLEOTIDE SEQUENCE [LARGE SCALE GENOMIC DNA]</scope>
    <source>
        <strain>ATCC 51907 / DSM 11121 / KW20 / Rd</strain>
    </source>
</reference>
<protein>
    <recommendedName>
        <fullName>Uncharacterized protein HI_0554</fullName>
    </recommendedName>
</protein>
<sequence length="180" mass="21605">MTTKYNAGIHHRRSIRLKHYNYRSEGFYFITICCKNKECLFGHIINQQMQLNDLGNYVKQCWENIPMFFPQVRIDEFVIMPNHLHGIIEIIEQVKGKCNLPLQLRATQLPQKGTSQTIGSIVRRFKAGVTSWARKNSEIFDVWQRNYYEHIIRDEKSYLQIYEYIQNNPILWEQDQLYVD</sequence>
<name>Y554_HAEIN</name>
<proteinExistence type="predicted"/>